<feature type="chain" id="PRO_0000305715" description="Mediator of RNA polymerase II transcription subunit 31">
    <location>
        <begin position="1"/>
        <end position="161"/>
    </location>
</feature>
<feature type="region of interest" description="Disordered" evidence="2">
    <location>
        <begin position="124"/>
        <end position="161"/>
    </location>
</feature>
<proteinExistence type="inferred from homology"/>
<keyword id="KW-0010">Activator</keyword>
<keyword id="KW-0539">Nucleus</keyword>
<keyword id="KW-1185">Reference proteome</keyword>
<keyword id="KW-0804">Transcription</keyword>
<keyword id="KW-0805">Transcription regulation</keyword>
<evidence type="ECO:0000250" key="1"/>
<evidence type="ECO:0000256" key="2">
    <source>
        <dbReference type="SAM" id="MobiDB-lite"/>
    </source>
</evidence>
<evidence type="ECO:0000305" key="3"/>
<dbReference type="EMBL" id="DS027056">
    <property type="protein sequence ID" value="EAW09915.1"/>
    <property type="molecule type" value="Genomic_DNA"/>
</dbReference>
<dbReference type="RefSeq" id="XP_001271341.1">
    <property type="nucleotide sequence ID" value="XM_001271340.1"/>
</dbReference>
<dbReference type="SMR" id="A1CL91"/>
<dbReference type="STRING" id="344612.A1CL91"/>
<dbReference type="EnsemblFungi" id="EAW09915">
    <property type="protein sequence ID" value="EAW09915"/>
    <property type="gene ID" value="ACLA_041330"/>
</dbReference>
<dbReference type="GeneID" id="4702866"/>
<dbReference type="KEGG" id="act:ACLA_041330"/>
<dbReference type="VEuPathDB" id="FungiDB:ACLA_041330"/>
<dbReference type="eggNOG" id="KOG4086">
    <property type="taxonomic scope" value="Eukaryota"/>
</dbReference>
<dbReference type="HOGENOM" id="CLU_071681_1_0_1"/>
<dbReference type="OMA" id="NPHYISH"/>
<dbReference type="OrthoDB" id="10257739at2759"/>
<dbReference type="Proteomes" id="UP000006701">
    <property type="component" value="Unassembled WGS sequence"/>
</dbReference>
<dbReference type="GO" id="GO:0016592">
    <property type="term" value="C:mediator complex"/>
    <property type="evidence" value="ECO:0007669"/>
    <property type="project" value="InterPro"/>
</dbReference>
<dbReference type="GO" id="GO:0003712">
    <property type="term" value="F:transcription coregulator activity"/>
    <property type="evidence" value="ECO:0007669"/>
    <property type="project" value="InterPro"/>
</dbReference>
<dbReference type="GO" id="GO:0006355">
    <property type="term" value="P:regulation of DNA-templated transcription"/>
    <property type="evidence" value="ECO:0007669"/>
    <property type="project" value="InterPro"/>
</dbReference>
<dbReference type="FunFam" id="1.10.10.1340:FF:000002">
    <property type="entry name" value="Mediator of RNA polymerase II transcription subunit 31"/>
    <property type="match status" value="1"/>
</dbReference>
<dbReference type="Gene3D" id="1.10.10.1340">
    <property type="entry name" value="Mediator of RNA polymerase II, submodule Med31 (Soh1)"/>
    <property type="match status" value="1"/>
</dbReference>
<dbReference type="InterPro" id="IPR038089">
    <property type="entry name" value="Med31_sf"/>
</dbReference>
<dbReference type="InterPro" id="IPR008831">
    <property type="entry name" value="Mediator_Med31"/>
</dbReference>
<dbReference type="PANTHER" id="PTHR13186">
    <property type="entry name" value="MEDIATOR OF RNA POLYMERASE II TRANSCRIPTION SUBUNIT 31"/>
    <property type="match status" value="1"/>
</dbReference>
<dbReference type="Pfam" id="PF05669">
    <property type="entry name" value="Med31"/>
    <property type="match status" value="1"/>
</dbReference>
<organism>
    <name type="scientific">Aspergillus clavatus (strain ATCC 1007 / CBS 513.65 / DSM 816 / NCTC 3887 / NRRL 1 / QM 1276 / 107)</name>
    <dbReference type="NCBI Taxonomy" id="344612"/>
    <lineage>
        <taxon>Eukaryota</taxon>
        <taxon>Fungi</taxon>
        <taxon>Dikarya</taxon>
        <taxon>Ascomycota</taxon>
        <taxon>Pezizomycotina</taxon>
        <taxon>Eurotiomycetes</taxon>
        <taxon>Eurotiomycetidae</taxon>
        <taxon>Eurotiales</taxon>
        <taxon>Aspergillaceae</taxon>
        <taxon>Aspergillus</taxon>
        <taxon>Aspergillus subgen. Fumigati</taxon>
    </lineage>
</organism>
<accession>A1CL91</accession>
<protein>
    <recommendedName>
        <fullName>Mediator of RNA polymerase II transcription subunit 31</fullName>
    </recommendedName>
    <alternativeName>
        <fullName>Mediator complex subunit 31</fullName>
    </alternativeName>
</protein>
<gene>
    <name type="primary">soh1</name>
    <name type="synonym">med31</name>
    <name type="ORF">ACLA_041330</name>
</gene>
<sequence>MDQQPGPVQQSSPPNLTNPRFTLELEFVSSLANPYYLSHLAVTYPNLLGISKSGDEGETSNESSDPEAKAFAAYLAYLYSYWKTPEYAQFLTHPGATLRALRLLQEETFRRDIIRPQVIEALAGTGVDEQGAQDTQEGEGEQKQNKEEDAQDAQENTESKT</sequence>
<name>MED31_ASPCL</name>
<comment type="function">
    <text evidence="1">Component of the Mediator complex, a coactivator involved in the regulated transcription of nearly all RNA polymerase II-dependent genes. Mediator functions as a bridge to convey information from gene-specific regulatory proteins to the basal RNA polymerase II transcription machinery. Mediator is recruited to promoters by direct interactions with regulatory proteins and serves as a scaffold for the assembly of a functional preinitiation complex with RNA polymerase II and the general transcription factors (By similarity).</text>
</comment>
<comment type="subunit">
    <text evidence="1">Component of the Mediator complex.</text>
</comment>
<comment type="subcellular location">
    <subcellularLocation>
        <location evidence="1">Nucleus</location>
    </subcellularLocation>
</comment>
<comment type="similarity">
    <text evidence="3">Belongs to the Mediator complex subunit 31 family.</text>
</comment>
<reference key="1">
    <citation type="journal article" date="2008" name="PLoS Genet.">
        <title>Genomic islands in the pathogenic filamentous fungus Aspergillus fumigatus.</title>
        <authorList>
            <person name="Fedorova N.D."/>
            <person name="Khaldi N."/>
            <person name="Joardar V.S."/>
            <person name="Maiti R."/>
            <person name="Amedeo P."/>
            <person name="Anderson M.J."/>
            <person name="Crabtree J."/>
            <person name="Silva J.C."/>
            <person name="Badger J.H."/>
            <person name="Albarraq A."/>
            <person name="Angiuoli S."/>
            <person name="Bussey H."/>
            <person name="Bowyer P."/>
            <person name="Cotty P.J."/>
            <person name="Dyer P.S."/>
            <person name="Egan A."/>
            <person name="Galens K."/>
            <person name="Fraser-Liggett C.M."/>
            <person name="Haas B.J."/>
            <person name="Inman J.M."/>
            <person name="Kent R."/>
            <person name="Lemieux S."/>
            <person name="Malavazi I."/>
            <person name="Orvis J."/>
            <person name="Roemer T."/>
            <person name="Ronning C.M."/>
            <person name="Sundaram J.P."/>
            <person name="Sutton G."/>
            <person name="Turner G."/>
            <person name="Venter J.C."/>
            <person name="White O.R."/>
            <person name="Whitty B.R."/>
            <person name="Youngman P."/>
            <person name="Wolfe K.H."/>
            <person name="Goldman G.H."/>
            <person name="Wortman J.R."/>
            <person name="Jiang B."/>
            <person name="Denning D.W."/>
            <person name="Nierman W.C."/>
        </authorList>
    </citation>
    <scope>NUCLEOTIDE SEQUENCE [LARGE SCALE GENOMIC DNA]</scope>
    <source>
        <strain>ATCC 1007 / CBS 513.65 / DSM 816 / NCTC 3887 / NRRL 1 / QM 1276 / 107</strain>
    </source>
</reference>